<feature type="chain" id="PRO_0000391614" description="TNF receptor-associated factor 6-B">
    <location>
        <begin position="1"/>
        <end position="556"/>
    </location>
</feature>
<feature type="domain" description="MATH" evidence="5">
    <location>
        <begin position="384"/>
        <end position="533"/>
    </location>
</feature>
<feature type="zinc finger region" description="RING-type; degenerate" evidence="6">
    <location>
        <begin position="72"/>
        <end position="111"/>
    </location>
</feature>
<feature type="zinc finger region" description="TRAF-type 1" evidence="7">
    <location>
        <begin position="152"/>
        <end position="204"/>
    </location>
</feature>
<feature type="zinc finger region" description="TRAF-type 2" evidence="7">
    <location>
        <begin position="205"/>
        <end position="261"/>
    </location>
</feature>
<feature type="coiled-coil region" evidence="4">
    <location>
        <begin position="318"/>
        <end position="356"/>
    </location>
</feature>
<reference key="1">
    <citation type="submission" date="2004-06" db="EMBL/GenBank/DDBJ databases">
        <authorList>
            <consortium name="NIH - Xenopus Gene Collection (XGC) project"/>
        </authorList>
    </citation>
    <scope>NUCLEOTIDE SEQUENCE [LARGE SCALE MRNA]</scope>
    <source>
        <tissue>Kidney</tissue>
    </source>
</reference>
<organism>
    <name type="scientific">Xenopus laevis</name>
    <name type="common">African clawed frog</name>
    <dbReference type="NCBI Taxonomy" id="8355"/>
    <lineage>
        <taxon>Eukaryota</taxon>
        <taxon>Metazoa</taxon>
        <taxon>Chordata</taxon>
        <taxon>Craniata</taxon>
        <taxon>Vertebrata</taxon>
        <taxon>Euteleostomi</taxon>
        <taxon>Amphibia</taxon>
        <taxon>Batrachia</taxon>
        <taxon>Anura</taxon>
        <taxon>Pipoidea</taxon>
        <taxon>Pipidae</taxon>
        <taxon>Xenopodinae</taxon>
        <taxon>Xenopus</taxon>
        <taxon>Xenopus</taxon>
    </lineage>
</organism>
<proteinExistence type="evidence at transcript level"/>
<sequence length="556" mass="63209">MSILNPRTSLEAGDSDDACCAAMASACCLNTKEDCDSPSTALPSGTPQSLEVEEVQGYDVEFDPPLESKYECPICLMALREAVQTPCGHRFCKACIVKSLRDAGHKCPVDNEILMENQLFPDNFAKREILSLKVKCPSQGCTETMELRHLERHLGQCQFASVECSQCQGSFPKSRLEKHMEHECGRRKIFCDNCGLAMAYEDMSGHELICPLAYVTCEYCQTNLIREQMPSHYSMDCTMAPIPCMYYEFGCTEKMQRNDLARHLQDFTQAHMRMMFQTLRSFSTTPTSHISDISFCDPNQFEPVPLSVAPAHPSHMPSHQDCSQETRNLRETIEQLEGRLVRQDHQIRELIAKMETQCTYVNELKHTIRSLEDKLLDVDGHHCNGVFIWKIKGFSGLQKTQEEEKPVVIHSPGFYTGKPGYKLCLRLHLQLPSAQRCANYISLFVHTMQGEYDSLLPWPLHGTIRLSILDQSEGAIIQDQEEVMDTKPDLLAFQRPTTQRNPKGFGYVTFMHLNTLKQRQYVKNDTLFVRCAVNIHLDVISPRREGFQPRSGDGAQ</sequence>
<comment type="function">
    <text evidence="3">E3 ubiquitin ligase that, together with UBE2N and UBE2V1, mediates the synthesis of 'Lys-63'-linked-polyubiquitin chains conjugated to proteins, such as IKBKG, IRAK1, AKT1 and AKT2. Also mediates ubiquitination of free/unanchored polyubiquitin chain that leads to MAP3K7 activation.</text>
</comment>
<comment type="catalytic activity">
    <reaction evidence="3">
        <text>S-ubiquitinyl-[E2 ubiquitin-conjugating enzyme]-L-cysteine + [acceptor protein]-L-lysine = [E2 ubiquitin-conjugating enzyme]-L-cysteine + N(6)-ubiquitinyl-[acceptor protein]-L-lysine.</text>
        <dbReference type="EC" id="2.3.2.27"/>
    </reaction>
</comment>
<comment type="pathway">
    <text evidence="3">Protein modification; protein ubiquitination.</text>
</comment>
<comment type="subunit">
    <text evidence="3">Homotrimer. Homooligomer.</text>
</comment>
<comment type="subcellular location">
    <subcellularLocation>
        <location evidence="3">Cytoplasm</location>
    </subcellularLocation>
    <subcellularLocation>
        <location evidence="3">Cytoplasm</location>
        <location evidence="3">Cell cortex</location>
    </subcellularLocation>
    <subcellularLocation>
        <location evidence="3">Nucleus</location>
    </subcellularLocation>
    <subcellularLocation>
        <location evidence="2">Lipid droplet</location>
    </subcellularLocation>
</comment>
<comment type="domain">
    <text evidence="1">The coiled coil domain mediates homo- and hetero-oligomerization.</text>
</comment>
<comment type="domain">
    <text evidence="1">The MATH/TRAF domain binds to receptor cytoplasmic domains.</text>
</comment>
<comment type="similarity">
    <text evidence="8">Belongs to the TNF receptor-associated factor family. A subfamily.</text>
</comment>
<keyword id="KW-0175">Coiled coil</keyword>
<keyword id="KW-0963">Cytoplasm</keyword>
<keyword id="KW-0551">Lipid droplet</keyword>
<keyword id="KW-0479">Metal-binding</keyword>
<keyword id="KW-0539">Nucleus</keyword>
<keyword id="KW-1185">Reference proteome</keyword>
<keyword id="KW-0677">Repeat</keyword>
<keyword id="KW-0808">Transferase</keyword>
<keyword id="KW-0833">Ubl conjugation pathway</keyword>
<keyword id="KW-0862">Zinc</keyword>
<keyword id="KW-0863">Zinc-finger</keyword>
<evidence type="ECO:0000250" key="1"/>
<evidence type="ECO:0000250" key="2">
    <source>
        <dbReference type="UniProtKB" id="P70196"/>
    </source>
</evidence>
<evidence type="ECO:0000250" key="3">
    <source>
        <dbReference type="UniProtKB" id="Q9Y4K3"/>
    </source>
</evidence>
<evidence type="ECO:0000255" key="4"/>
<evidence type="ECO:0000255" key="5">
    <source>
        <dbReference type="PROSITE-ProRule" id="PRU00129"/>
    </source>
</evidence>
<evidence type="ECO:0000255" key="6">
    <source>
        <dbReference type="PROSITE-ProRule" id="PRU00175"/>
    </source>
</evidence>
<evidence type="ECO:0000255" key="7">
    <source>
        <dbReference type="PROSITE-ProRule" id="PRU00207"/>
    </source>
</evidence>
<evidence type="ECO:0000305" key="8"/>
<accession>Q6DJN2</accession>
<dbReference type="EC" id="2.3.2.27"/>
<dbReference type="EMBL" id="BC075143">
    <property type="protein sequence ID" value="AAH75143.1"/>
    <property type="molecule type" value="mRNA"/>
</dbReference>
<dbReference type="RefSeq" id="NP_001086348.1">
    <property type="nucleotide sequence ID" value="NM_001092879.1"/>
</dbReference>
<dbReference type="SMR" id="Q6DJN2"/>
<dbReference type="DNASU" id="444777"/>
<dbReference type="GeneID" id="444777"/>
<dbReference type="KEGG" id="xla:444777"/>
<dbReference type="AGR" id="Xenbase:XB-GENE-865394"/>
<dbReference type="CTD" id="444777"/>
<dbReference type="Xenbase" id="XB-GENE-865394">
    <property type="gene designation" value="traf6.L"/>
</dbReference>
<dbReference type="OrthoDB" id="6475149at2759"/>
<dbReference type="UniPathway" id="UPA00143"/>
<dbReference type="Proteomes" id="UP000186698">
    <property type="component" value="Chromosome 4L"/>
</dbReference>
<dbReference type="Bgee" id="444777">
    <property type="expression patterns" value="Expressed in oocyte and 19 other cell types or tissues"/>
</dbReference>
<dbReference type="GO" id="GO:0005938">
    <property type="term" value="C:cell cortex"/>
    <property type="evidence" value="ECO:0007669"/>
    <property type="project" value="UniProtKB-SubCell"/>
</dbReference>
<dbReference type="GO" id="GO:0005737">
    <property type="term" value="C:cytoplasm"/>
    <property type="evidence" value="ECO:0000318"/>
    <property type="project" value="GO_Central"/>
</dbReference>
<dbReference type="GO" id="GO:0009898">
    <property type="term" value="C:cytoplasmic side of plasma membrane"/>
    <property type="evidence" value="ECO:0000318"/>
    <property type="project" value="GO_Central"/>
</dbReference>
<dbReference type="GO" id="GO:0098978">
    <property type="term" value="C:glutamatergic synapse"/>
    <property type="evidence" value="ECO:0000318"/>
    <property type="project" value="GO_Central"/>
</dbReference>
<dbReference type="GO" id="GO:0005811">
    <property type="term" value="C:lipid droplet"/>
    <property type="evidence" value="ECO:0007669"/>
    <property type="project" value="UniProtKB-SubCell"/>
</dbReference>
<dbReference type="GO" id="GO:0005634">
    <property type="term" value="C:nucleus"/>
    <property type="evidence" value="ECO:0007669"/>
    <property type="project" value="UniProtKB-SubCell"/>
</dbReference>
<dbReference type="GO" id="GO:0035591">
    <property type="term" value="F:signaling adaptor activity"/>
    <property type="evidence" value="ECO:0000318"/>
    <property type="project" value="GO_Central"/>
</dbReference>
<dbReference type="GO" id="GO:0005164">
    <property type="term" value="F:tumor necrosis factor receptor binding"/>
    <property type="evidence" value="ECO:0007669"/>
    <property type="project" value="InterPro"/>
</dbReference>
<dbReference type="GO" id="GO:0061630">
    <property type="term" value="F:ubiquitin protein ligase activity"/>
    <property type="evidence" value="ECO:0000318"/>
    <property type="project" value="GO_Central"/>
</dbReference>
<dbReference type="GO" id="GO:0004842">
    <property type="term" value="F:ubiquitin-protein transferase activity"/>
    <property type="evidence" value="ECO:0000250"/>
    <property type="project" value="UniProtKB"/>
</dbReference>
<dbReference type="GO" id="GO:0008270">
    <property type="term" value="F:zinc ion binding"/>
    <property type="evidence" value="ECO:0007669"/>
    <property type="project" value="UniProtKB-KW"/>
</dbReference>
<dbReference type="GO" id="GO:0007250">
    <property type="term" value="P:activation of NF-kappaB-inducing kinase activity"/>
    <property type="evidence" value="ECO:0000314"/>
    <property type="project" value="UniProtKB"/>
</dbReference>
<dbReference type="GO" id="GO:0045087">
    <property type="term" value="P:innate immune response"/>
    <property type="evidence" value="ECO:0000318"/>
    <property type="project" value="GO_Central"/>
</dbReference>
<dbReference type="GO" id="GO:0031663">
    <property type="term" value="P:lipopolysaccharide-mediated signaling pathway"/>
    <property type="evidence" value="ECO:0000318"/>
    <property type="project" value="GO_Central"/>
</dbReference>
<dbReference type="GO" id="GO:0070534">
    <property type="term" value="P:protein K63-linked ubiquitination"/>
    <property type="evidence" value="ECO:0000250"/>
    <property type="project" value="UniProtKB"/>
</dbReference>
<dbReference type="GO" id="GO:0042981">
    <property type="term" value="P:regulation of apoptotic process"/>
    <property type="evidence" value="ECO:0007669"/>
    <property type="project" value="InterPro"/>
</dbReference>
<dbReference type="GO" id="GO:0043122">
    <property type="term" value="P:regulation of canonical NF-kappaB signal transduction"/>
    <property type="evidence" value="ECO:0000318"/>
    <property type="project" value="GO_Central"/>
</dbReference>
<dbReference type="CDD" id="cd03776">
    <property type="entry name" value="MATH_TRAF6"/>
    <property type="match status" value="1"/>
</dbReference>
<dbReference type="CDD" id="cd16643">
    <property type="entry name" value="mRING-HC-C3HC3D_TRAF6"/>
    <property type="match status" value="1"/>
</dbReference>
<dbReference type="FunFam" id="2.60.210.10:FF:000010">
    <property type="entry name" value="TNF receptor-associated factor"/>
    <property type="match status" value="1"/>
</dbReference>
<dbReference type="FunFam" id="3.30.40.10:FF:000179">
    <property type="entry name" value="TNF receptor-associated factor"/>
    <property type="match status" value="1"/>
</dbReference>
<dbReference type="FunFam" id="3.30.40.10:FF:000211">
    <property type="entry name" value="TNF receptor-associated factor"/>
    <property type="match status" value="1"/>
</dbReference>
<dbReference type="Gene3D" id="2.60.210.10">
    <property type="entry name" value="Apoptosis, Tumor Necrosis Factor Receptor Associated Protein 2, Chain A"/>
    <property type="match status" value="1"/>
</dbReference>
<dbReference type="Gene3D" id="3.30.40.10">
    <property type="entry name" value="Zinc/RING finger domain, C3HC4 (zinc finger)"/>
    <property type="match status" value="3"/>
</dbReference>
<dbReference type="InterPro" id="IPR002083">
    <property type="entry name" value="MATH/TRAF_dom"/>
</dbReference>
<dbReference type="InterPro" id="IPR012227">
    <property type="entry name" value="TNF_rcpt-assoc_TRAF_met"/>
</dbReference>
<dbReference type="InterPro" id="IPR008974">
    <property type="entry name" value="TRAF-like"/>
</dbReference>
<dbReference type="InterPro" id="IPR049342">
    <property type="entry name" value="TRAF1-6_MATH_dom"/>
</dbReference>
<dbReference type="InterPro" id="IPR037309">
    <property type="entry name" value="TRAF6_MATH"/>
</dbReference>
<dbReference type="InterPro" id="IPR027139">
    <property type="entry name" value="TRAF6_RING-HC"/>
</dbReference>
<dbReference type="InterPro" id="IPR041310">
    <property type="entry name" value="TRAF6_Z2"/>
</dbReference>
<dbReference type="InterPro" id="IPR001841">
    <property type="entry name" value="Znf_RING"/>
</dbReference>
<dbReference type="InterPro" id="IPR013083">
    <property type="entry name" value="Znf_RING/FYVE/PHD"/>
</dbReference>
<dbReference type="InterPro" id="IPR017907">
    <property type="entry name" value="Znf_RING_CS"/>
</dbReference>
<dbReference type="InterPro" id="IPR001293">
    <property type="entry name" value="Znf_TRAF"/>
</dbReference>
<dbReference type="PANTHER" id="PTHR10131">
    <property type="entry name" value="TNF RECEPTOR ASSOCIATED FACTOR"/>
    <property type="match status" value="1"/>
</dbReference>
<dbReference type="PANTHER" id="PTHR10131:SF152">
    <property type="entry name" value="TNF RECEPTOR-ASSOCIATED FACTOR 6"/>
    <property type="match status" value="1"/>
</dbReference>
<dbReference type="Pfam" id="PF21355">
    <property type="entry name" value="TRAF-mep_MATH"/>
    <property type="match status" value="1"/>
</dbReference>
<dbReference type="Pfam" id="PF18048">
    <property type="entry name" value="TRAF6_Z2"/>
    <property type="match status" value="1"/>
</dbReference>
<dbReference type="Pfam" id="PF13923">
    <property type="entry name" value="zf-C3HC4_2"/>
    <property type="match status" value="1"/>
</dbReference>
<dbReference type="Pfam" id="PF02176">
    <property type="entry name" value="zf-TRAF"/>
    <property type="match status" value="1"/>
</dbReference>
<dbReference type="PIRSF" id="PIRSF015614">
    <property type="entry name" value="TRAF"/>
    <property type="match status" value="1"/>
</dbReference>
<dbReference type="SMART" id="SM00061">
    <property type="entry name" value="MATH"/>
    <property type="match status" value="1"/>
</dbReference>
<dbReference type="SMART" id="SM00184">
    <property type="entry name" value="RING"/>
    <property type="match status" value="2"/>
</dbReference>
<dbReference type="SUPFAM" id="SSF57850">
    <property type="entry name" value="RING/U-box"/>
    <property type="match status" value="1"/>
</dbReference>
<dbReference type="SUPFAM" id="SSF49599">
    <property type="entry name" value="TRAF domain-like"/>
    <property type="match status" value="3"/>
</dbReference>
<dbReference type="PROSITE" id="PS50144">
    <property type="entry name" value="MATH"/>
    <property type="match status" value="1"/>
</dbReference>
<dbReference type="PROSITE" id="PS00518">
    <property type="entry name" value="ZF_RING_1"/>
    <property type="match status" value="1"/>
</dbReference>
<dbReference type="PROSITE" id="PS50089">
    <property type="entry name" value="ZF_RING_2"/>
    <property type="match status" value="1"/>
</dbReference>
<dbReference type="PROSITE" id="PS50145">
    <property type="entry name" value="ZF_TRAF"/>
    <property type="match status" value="2"/>
</dbReference>
<gene>
    <name type="primary">traf6-b</name>
</gene>
<protein>
    <recommendedName>
        <fullName>TNF receptor-associated factor 6-B</fullName>
        <ecNumber>2.3.2.27</ecNumber>
    </recommendedName>
    <alternativeName>
        <fullName>E3 ubiquitin-protein ligase TRAF6</fullName>
    </alternativeName>
    <alternativeName>
        <fullName evidence="8">RING-type E3 ubiquitin transferase TRAF6-B</fullName>
    </alternativeName>
</protein>
<name>TRF6B_XENLA</name>